<gene>
    <name evidence="1" type="primary">rplQ</name>
    <name type="ordered locus">BCG9842_B5167</name>
</gene>
<sequence>MAYRKLGRTSAQRKAMLRDLATDLIINERIQTTETRAKELRSVVEKMITLGKRGDLHARRQAAAFIRNEVANAETGQDALQKLFADVAPRYAERQGGYTRIAKIGPRRGDAAPMVIIELV</sequence>
<comment type="subunit">
    <text evidence="1">Part of the 50S ribosomal subunit. Contacts protein L32.</text>
</comment>
<comment type="similarity">
    <text evidence="1">Belongs to the bacterial ribosomal protein bL17 family.</text>
</comment>
<dbReference type="EMBL" id="CP001186">
    <property type="protein sequence ID" value="ACK97168.1"/>
    <property type="molecule type" value="Genomic_DNA"/>
</dbReference>
<dbReference type="RefSeq" id="WP_000331490.1">
    <property type="nucleotide sequence ID" value="NC_011772.1"/>
</dbReference>
<dbReference type="SMR" id="B7IT47"/>
<dbReference type="GeneID" id="93010915"/>
<dbReference type="KEGG" id="bcg:BCG9842_B5167"/>
<dbReference type="HOGENOM" id="CLU_074407_2_2_9"/>
<dbReference type="Proteomes" id="UP000006744">
    <property type="component" value="Chromosome"/>
</dbReference>
<dbReference type="GO" id="GO:0022625">
    <property type="term" value="C:cytosolic large ribosomal subunit"/>
    <property type="evidence" value="ECO:0007669"/>
    <property type="project" value="TreeGrafter"/>
</dbReference>
<dbReference type="GO" id="GO:0003735">
    <property type="term" value="F:structural constituent of ribosome"/>
    <property type="evidence" value="ECO:0007669"/>
    <property type="project" value="InterPro"/>
</dbReference>
<dbReference type="GO" id="GO:0006412">
    <property type="term" value="P:translation"/>
    <property type="evidence" value="ECO:0007669"/>
    <property type="project" value="UniProtKB-UniRule"/>
</dbReference>
<dbReference type="FunFam" id="3.90.1030.10:FF:000002">
    <property type="entry name" value="50S ribosomal protein L17"/>
    <property type="match status" value="1"/>
</dbReference>
<dbReference type="Gene3D" id="3.90.1030.10">
    <property type="entry name" value="Ribosomal protein L17"/>
    <property type="match status" value="1"/>
</dbReference>
<dbReference type="HAMAP" id="MF_01368">
    <property type="entry name" value="Ribosomal_bL17"/>
    <property type="match status" value="1"/>
</dbReference>
<dbReference type="InterPro" id="IPR000456">
    <property type="entry name" value="Ribosomal_bL17"/>
</dbReference>
<dbReference type="InterPro" id="IPR047859">
    <property type="entry name" value="Ribosomal_bL17_CS"/>
</dbReference>
<dbReference type="InterPro" id="IPR036373">
    <property type="entry name" value="Ribosomal_bL17_sf"/>
</dbReference>
<dbReference type="NCBIfam" id="TIGR00059">
    <property type="entry name" value="L17"/>
    <property type="match status" value="1"/>
</dbReference>
<dbReference type="PANTHER" id="PTHR14413:SF16">
    <property type="entry name" value="LARGE RIBOSOMAL SUBUNIT PROTEIN BL17M"/>
    <property type="match status" value="1"/>
</dbReference>
<dbReference type="PANTHER" id="PTHR14413">
    <property type="entry name" value="RIBOSOMAL PROTEIN L17"/>
    <property type="match status" value="1"/>
</dbReference>
<dbReference type="Pfam" id="PF01196">
    <property type="entry name" value="Ribosomal_L17"/>
    <property type="match status" value="1"/>
</dbReference>
<dbReference type="SUPFAM" id="SSF64263">
    <property type="entry name" value="Prokaryotic ribosomal protein L17"/>
    <property type="match status" value="1"/>
</dbReference>
<dbReference type="PROSITE" id="PS01167">
    <property type="entry name" value="RIBOSOMAL_L17"/>
    <property type="match status" value="1"/>
</dbReference>
<name>RL17_BACC2</name>
<evidence type="ECO:0000255" key="1">
    <source>
        <dbReference type="HAMAP-Rule" id="MF_01368"/>
    </source>
</evidence>
<evidence type="ECO:0000305" key="2"/>
<protein>
    <recommendedName>
        <fullName evidence="1">Large ribosomal subunit protein bL17</fullName>
    </recommendedName>
    <alternativeName>
        <fullName evidence="2">50S ribosomal protein L17</fullName>
    </alternativeName>
</protein>
<feature type="chain" id="PRO_1000144375" description="Large ribosomal subunit protein bL17">
    <location>
        <begin position="1"/>
        <end position="120"/>
    </location>
</feature>
<keyword id="KW-0687">Ribonucleoprotein</keyword>
<keyword id="KW-0689">Ribosomal protein</keyword>
<reference key="1">
    <citation type="submission" date="2008-10" db="EMBL/GenBank/DDBJ databases">
        <title>Genome sequence of Bacillus cereus G9842.</title>
        <authorList>
            <person name="Dodson R.J."/>
            <person name="Durkin A.S."/>
            <person name="Rosovitz M.J."/>
            <person name="Rasko D.A."/>
            <person name="Hoffmaster A."/>
            <person name="Ravel J."/>
            <person name="Sutton G."/>
        </authorList>
    </citation>
    <scope>NUCLEOTIDE SEQUENCE [LARGE SCALE GENOMIC DNA]</scope>
    <source>
        <strain>G9842</strain>
    </source>
</reference>
<accession>B7IT47</accession>
<organism>
    <name type="scientific">Bacillus cereus (strain G9842)</name>
    <dbReference type="NCBI Taxonomy" id="405531"/>
    <lineage>
        <taxon>Bacteria</taxon>
        <taxon>Bacillati</taxon>
        <taxon>Bacillota</taxon>
        <taxon>Bacilli</taxon>
        <taxon>Bacillales</taxon>
        <taxon>Bacillaceae</taxon>
        <taxon>Bacillus</taxon>
        <taxon>Bacillus cereus group</taxon>
    </lineage>
</organism>
<proteinExistence type="inferred from homology"/>